<sequence length="502" mass="55850">MSQEKYIMAIDQGTTSSRAIIFNKKGEKVSSSQKEFTQIFPQAGWVEHNANEIWNSVQSVIAGAFIESGVKPNQIEAIGITNQRETTVVWDKKTGLPIYNAIVWQSRQTAPLAEQLKSQGYVEKFHEKTGLIIDAYFSATKVRWILDHVEGAQERAEKGELLFGTIDTWLVWKLTDGAAHVTDYSNAARTMLYNIKELKWDDEILEILNIPKAILPEVRSNSEIYGKTAPFHFYGGEVPISGMAGDQQAALFGQLAFEPGMVKNTYGTGSFIIMNTGEEMQLSENNLLTTIGYGINGKVYYALEGSIFIAGSAIQWLRDGLRMVENSPESEKYARDSHNNDEVYVVPAFTGLGAPYWNQNARGSVFGLTRGTSKEDFIKATLQSIAYQVRDIIDTMQVDTQTAIQVLKVDGGAAMNNFLMQFQADILGIDIARAKNLETTALGAAFLAGLSVGYWKDLDELKLLNETGELFEPSMNESRKEQLYKGWKKAVKATQVFAEVDD</sequence>
<accession>P63742</accession>
<accession>Q97N78</accession>
<feature type="chain" id="PRO_0000059505" description="Glycerol kinase">
    <location>
        <begin position="1"/>
        <end position="502"/>
    </location>
</feature>
<feature type="binding site" evidence="1">
    <location>
        <position position="14"/>
    </location>
    <ligand>
        <name>ADP</name>
        <dbReference type="ChEBI" id="CHEBI:456216"/>
    </ligand>
</feature>
<feature type="binding site" evidence="1">
    <location>
        <position position="14"/>
    </location>
    <ligand>
        <name>ATP</name>
        <dbReference type="ChEBI" id="CHEBI:30616"/>
    </ligand>
</feature>
<feature type="binding site" evidence="1">
    <location>
        <position position="14"/>
    </location>
    <ligand>
        <name>sn-glycerol 3-phosphate</name>
        <dbReference type="ChEBI" id="CHEBI:57597"/>
    </ligand>
</feature>
<feature type="binding site" evidence="1">
    <location>
        <position position="15"/>
    </location>
    <ligand>
        <name>ATP</name>
        <dbReference type="ChEBI" id="CHEBI:30616"/>
    </ligand>
</feature>
<feature type="binding site" evidence="1">
    <location>
        <position position="16"/>
    </location>
    <ligand>
        <name>ATP</name>
        <dbReference type="ChEBI" id="CHEBI:30616"/>
    </ligand>
</feature>
<feature type="binding site" evidence="1">
    <location>
        <position position="18"/>
    </location>
    <ligand>
        <name>ADP</name>
        <dbReference type="ChEBI" id="CHEBI:456216"/>
    </ligand>
</feature>
<feature type="binding site" evidence="1">
    <location>
        <position position="84"/>
    </location>
    <ligand>
        <name>glycerol</name>
        <dbReference type="ChEBI" id="CHEBI:17754"/>
    </ligand>
</feature>
<feature type="binding site" evidence="1">
    <location>
        <position position="84"/>
    </location>
    <ligand>
        <name>sn-glycerol 3-phosphate</name>
        <dbReference type="ChEBI" id="CHEBI:57597"/>
    </ligand>
</feature>
<feature type="binding site" evidence="1">
    <location>
        <position position="85"/>
    </location>
    <ligand>
        <name>glycerol</name>
        <dbReference type="ChEBI" id="CHEBI:17754"/>
    </ligand>
</feature>
<feature type="binding site" evidence="1">
    <location>
        <position position="85"/>
    </location>
    <ligand>
        <name>sn-glycerol 3-phosphate</name>
        <dbReference type="ChEBI" id="CHEBI:57597"/>
    </ligand>
</feature>
<feature type="binding site" evidence="1">
    <location>
        <position position="136"/>
    </location>
    <ligand>
        <name>glycerol</name>
        <dbReference type="ChEBI" id="CHEBI:17754"/>
    </ligand>
</feature>
<feature type="binding site" evidence="1">
    <location>
        <position position="136"/>
    </location>
    <ligand>
        <name>sn-glycerol 3-phosphate</name>
        <dbReference type="ChEBI" id="CHEBI:57597"/>
    </ligand>
</feature>
<feature type="binding site" evidence="1">
    <location>
        <position position="246"/>
    </location>
    <ligand>
        <name>glycerol</name>
        <dbReference type="ChEBI" id="CHEBI:17754"/>
    </ligand>
</feature>
<feature type="binding site" evidence="1">
    <location>
        <position position="246"/>
    </location>
    <ligand>
        <name>sn-glycerol 3-phosphate</name>
        <dbReference type="ChEBI" id="CHEBI:57597"/>
    </ligand>
</feature>
<feature type="binding site" evidence="1">
    <location>
        <position position="247"/>
    </location>
    <ligand>
        <name>glycerol</name>
        <dbReference type="ChEBI" id="CHEBI:17754"/>
    </ligand>
</feature>
<feature type="binding site" evidence="1">
    <location>
        <position position="268"/>
    </location>
    <ligand>
        <name>ADP</name>
        <dbReference type="ChEBI" id="CHEBI:456216"/>
    </ligand>
</feature>
<feature type="binding site" evidence="1">
    <location>
        <position position="268"/>
    </location>
    <ligand>
        <name>ATP</name>
        <dbReference type="ChEBI" id="CHEBI:30616"/>
    </ligand>
</feature>
<feature type="binding site" evidence="1">
    <location>
        <position position="311"/>
    </location>
    <ligand>
        <name>ADP</name>
        <dbReference type="ChEBI" id="CHEBI:456216"/>
    </ligand>
</feature>
<feature type="binding site" evidence="1">
    <location>
        <position position="311"/>
    </location>
    <ligand>
        <name>ATP</name>
        <dbReference type="ChEBI" id="CHEBI:30616"/>
    </ligand>
</feature>
<feature type="binding site" evidence="1">
    <location>
        <position position="315"/>
    </location>
    <ligand>
        <name>ATP</name>
        <dbReference type="ChEBI" id="CHEBI:30616"/>
    </ligand>
</feature>
<feature type="binding site" evidence="1">
    <location>
        <position position="412"/>
    </location>
    <ligand>
        <name>ADP</name>
        <dbReference type="ChEBI" id="CHEBI:456216"/>
    </ligand>
</feature>
<feature type="binding site" evidence="1">
    <location>
        <position position="412"/>
    </location>
    <ligand>
        <name>ATP</name>
        <dbReference type="ChEBI" id="CHEBI:30616"/>
    </ligand>
</feature>
<feature type="binding site" evidence="1">
    <location>
        <position position="416"/>
    </location>
    <ligand>
        <name>ADP</name>
        <dbReference type="ChEBI" id="CHEBI:456216"/>
    </ligand>
</feature>
<feature type="modified residue" description="Phosphohistidine; by HPr" evidence="1">
    <location>
        <position position="232"/>
    </location>
</feature>
<evidence type="ECO:0000255" key="1">
    <source>
        <dbReference type="HAMAP-Rule" id="MF_00186"/>
    </source>
</evidence>
<name>GLPK_STRPN</name>
<reference key="1">
    <citation type="journal article" date="2001" name="Science">
        <title>Complete genome sequence of a virulent isolate of Streptococcus pneumoniae.</title>
        <authorList>
            <person name="Tettelin H."/>
            <person name="Nelson K.E."/>
            <person name="Paulsen I.T."/>
            <person name="Eisen J.A."/>
            <person name="Read T.D."/>
            <person name="Peterson S.N."/>
            <person name="Heidelberg J.F."/>
            <person name="DeBoy R.T."/>
            <person name="Haft D.H."/>
            <person name="Dodson R.J."/>
            <person name="Durkin A.S."/>
            <person name="Gwinn M.L."/>
            <person name="Kolonay J.F."/>
            <person name="Nelson W.C."/>
            <person name="Peterson J.D."/>
            <person name="Umayam L.A."/>
            <person name="White O."/>
            <person name="Salzberg S.L."/>
            <person name="Lewis M.R."/>
            <person name="Radune D."/>
            <person name="Holtzapple E.K."/>
            <person name="Khouri H.M."/>
            <person name="Wolf A.M."/>
            <person name="Utterback T.R."/>
            <person name="Hansen C.L."/>
            <person name="McDonald L.A."/>
            <person name="Feldblyum T.V."/>
            <person name="Angiuoli S.V."/>
            <person name="Dickinson T."/>
            <person name="Hickey E.K."/>
            <person name="Holt I.E."/>
            <person name="Loftus B.J."/>
            <person name="Yang F."/>
            <person name="Smith H.O."/>
            <person name="Venter J.C."/>
            <person name="Dougherty B.A."/>
            <person name="Morrison D.A."/>
            <person name="Hollingshead S.K."/>
            <person name="Fraser C.M."/>
        </authorList>
    </citation>
    <scope>NUCLEOTIDE SEQUENCE [LARGE SCALE GENOMIC DNA]</scope>
    <source>
        <strain>ATCC BAA-334 / TIGR4</strain>
    </source>
</reference>
<proteinExistence type="inferred from homology"/>
<dbReference type="EC" id="2.7.1.30" evidence="1"/>
<dbReference type="EMBL" id="AE005672">
    <property type="protein sequence ID" value="AAK76237.1"/>
    <property type="molecule type" value="Genomic_DNA"/>
</dbReference>
<dbReference type="PIR" id="D95255">
    <property type="entry name" value="D95255"/>
</dbReference>
<dbReference type="RefSeq" id="WP_000076776.1">
    <property type="nucleotide sequence ID" value="NZ_CP155539.1"/>
</dbReference>
<dbReference type="SMR" id="P63742"/>
<dbReference type="PaxDb" id="170187-SP_2186"/>
<dbReference type="EnsemblBacteria" id="AAK76237">
    <property type="protein sequence ID" value="AAK76237"/>
    <property type="gene ID" value="SP_2186"/>
</dbReference>
<dbReference type="KEGG" id="spn:SP_2186"/>
<dbReference type="eggNOG" id="COG0554">
    <property type="taxonomic scope" value="Bacteria"/>
</dbReference>
<dbReference type="PhylomeDB" id="P63742"/>
<dbReference type="BioCyc" id="SPNE170187:G1FZB-2284-MONOMER"/>
<dbReference type="UniPathway" id="UPA00618">
    <property type="reaction ID" value="UER00672"/>
</dbReference>
<dbReference type="Proteomes" id="UP000000585">
    <property type="component" value="Chromosome"/>
</dbReference>
<dbReference type="GO" id="GO:0005829">
    <property type="term" value="C:cytosol"/>
    <property type="evidence" value="ECO:0007669"/>
    <property type="project" value="TreeGrafter"/>
</dbReference>
<dbReference type="GO" id="GO:0005524">
    <property type="term" value="F:ATP binding"/>
    <property type="evidence" value="ECO:0007669"/>
    <property type="project" value="UniProtKB-UniRule"/>
</dbReference>
<dbReference type="GO" id="GO:0004370">
    <property type="term" value="F:glycerol kinase activity"/>
    <property type="evidence" value="ECO:0000250"/>
    <property type="project" value="UniProtKB"/>
</dbReference>
<dbReference type="GO" id="GO:0019563">
    <property type="term" value="P:glycerol catabolic process"/>
    <property type="evidence" value="ECO:0007669"/>
    <property type="project" value="UniProtKB-UniRule"/>
</dbReference>
<dbReference type="GO" id="GO:0006071">
    <property type="term" value="P:glycerol metabolic process"/>
    <property type="evidence" value="ECO:0000250"/>
    <property type="project" value="UniProtKB"/>
</dbReference>
<dbReference type="GO" id="GO:0006072">
    <property type="term" value="P:glycerol-3-phosphate metabolic process"/>
    <property type="evidence" value="ECO:0007669"/>
    <property type="project" value="InterPro"/>
</dbReference>
<dbReference type="CDD" id="cd07786">
    <property type="entry name" value="FGGY_EcGK_like"/>
    <property type="match status" value="1"/>
</dbReference>
<dbReference type="FunFam" id="3.30.420.40:FF:000007">
    <property type="entry name" value="Glycerol kinase"/>
    <property type="match status" value="1"/>
</dbReference>
<dbReference type="FunFam" id="3.30.420.40:FF:000008">
    <property type="entry name" value="Glycerol kinase"/>
    <property type="match status" value="1"/>
</dbReference>
<dbReference type="Gene3D" id="3.30.420.40">
    <property type="match status" value="2"/>
</dbReference>
<dbReference type="HAMAP" id="MF_00186">
    <property type="entry name" value="Glycerol_kin"/>
    <property type="match status" value="1"/>
</dbReference>
<dbReference type="InterPro" id="IPR043129">
    <property type="entry name" value="ATPase_NBD"/>
</dbReference>
<dbReference type="InterPro" id="IPR000577">
    <property type="entry name" value="Carb_kinase_FGGY"/>
</dbReference>
<dbReference type="InterPro" id="IPR018483">
    <property type="entry name" value="Carb_kinase_FGGY_CS"/>
</dbReference>
<dbReference type="InterPro" id="IPR018485">
    <property type="entry name" value="FGGY_C"/>
</dbReference>
<dbReference type="InterPro" id="IPR018484">
    <property type="entry name" value="FGGY_N"/>
</dbReference>
<dbReference type="InterPro" id="IPR005999">
    <property type="entry name" value="Glycerol_kin"/>
</dbReference>
<dbReference type="NCBIfam" id="TIGR01311">
    <property type="entry name" value="glycerol_kin"/>
    <property type="match status" value="1"/>
</dbReference>
<dbReference type="NCBIfam" id="NF000756">
    <property type="entry name" value="PRK00047.1"/>
    <property type="match status" value="1"/>
</dbReference>
<dbReference type="PANTHER" id="PTHR10196:SF69">
    <property type="entry name" value="GLYCEROL KINASE"/>
    <property type="match status" value="1"/>
</dbReference>
<dbReference type="PANTHER" id="PTHR10196">
    <property type="entry name" value="SUGAR KINASE"/>
    <property type="match status" value="1"/>
</dbReference>
<dbReference type="Pfam" id="PF02782">
    <property type="entry name" value="FGGY_C"/>
    <property type="match status" value="1"/>
</dbReference>
<dbReference type="Pfam" id="PF00370">
    <property type="entry name" value="FGGY_N"/>
    <property type="match status" value="1"/>
</dbReference>
<dbReference type="PIRSF" id="PIRSF000538">
    <property type="entry name" value="GlpK"/>
    <property type="match status" value="1"/>
</dbReference>
<dbReference type="SUPFAM" id="SSF53067">
    <property type="entry name" value="Actin-like ATPase domain"/>
    <property type="match status" value="2"/>
</dbReference>
<dbReference type="PROSITE" id="PS00933">
    <property type="entry name" value="FGGY_KINASES_1"/>
    <property type="match status" value="1"/>
</dbReference>
<dbReference type="PROSITE" id="PS00445">
    <property type="entry name" value="FGGY_KINASES_2"/>
    <property type="match status" value="1"/>
</dbReference>
<organism>
    <name type="scientific">Streptococcus pneumoniae serotype 4 (strain ATCC BAA-334 / TIGR4)</name>
    <dbReference type="NCBI Taxonomy" id="170187"/>
    <lineage>
        <taxon>Bacteria</taxon>
        <taxon>Bacillati</taxon>
        <taxon>Bacillota</taxon>
        <taxon>Bacilli</taxon>
        <taxon>Lactobacillales</taxon>
        <taxon>Streptococcaceae</taxon>
        <taxon>Streptococcus</taxon>
    </lineage>
</organism>
<keyword id="KW-0067">ATP-binding</keyword>
<keyword id="KW-0319">Glycerol metabolism</keyword>
<keyword id="KW-0418">Kinase</keyword>
<keyword id="KW-0547">Nucleotide-binding</keyword>
<keyword id="KW-0597">Phosphoprotein</keyword>
<keyword id="KW-1185">Reference proteome</keyword>
<keyword id="KW-0808">Transferase</keyword>
<comment type="function">
    <text evidence="1">Key enzyme in the regulation of glycerol uptake and metabolism. Catalyzes the phosphorylation of glycerol to yield sn-glycerol 3-phosphate.</text>
</comment>
<comment type="catalytic activity">
    <reaction evidence="1">
        <text>glycerol + ATP = sn-glycerol 3-phosphate + ADP + H(+)</text>
        <dbReference type="Rhea" id="RHEA:21644"/>
        <dbReference type="ChEBI" id="CHEBI:15378"/>
        <dbReference type="ChEBI" id="CHEBI:17754"/>
        <dbReference type="ChEBI" id="CHEBI:30616"/>
        <dbReference type="ChEBI" id="CHEBI:57597"/>
        <dbReference type="ChEBI" id="CHEBI:456216"/>
        <dbReference type="EC" id="2.7.1.30"/>
    </reaction>
</comment>
<comment type="activity regulation">
    <text evidence="1">Activated by phosphorylation and inhibited by fructose 1,6-bisphosphate (FBP).</text>
</comment>
<comment type="pathway">
    <text evidence="1">Polyol metabolism; glycerol degradation via glycerol kinase pathway; sn-glycerol 3-phosphate from glycerol: step 1/1.</text>
</comment>
<comment type="subunit">
    <text evidence="1">Homotetramer and homodimer (in equilibrium).</text>
</comment>
<comment type="PTM">
    <text evidence="1">The phosphoenolpyruvate-dependent sugar phosphotransferase system (PTS), including enzyme I, and histidine-containing protein (HPr) are required for the phosphorylation, which leads to the activation of the enzyme.</text>
</comment>
<comment type="similarity">
    <text evidence="1">Belongs to the FGGY kinase family.</text>
</comment>
<protein>
    <recommendedName>
        <fullName evidence="1">Glycerol kinase</fullName>
        <ecNumber evidence="1">2.7.1.30</ecNumber>
    </recommendedName>
    <alternativeName>
        <fullName evidence="1">ATP:glycerol 3-phosphotransferase</fullName>
    </alternativeName>
    <alternativeName>
        <fullName evidence="1">Glycerokinase</fullName>
        <shortName evidence="1">GK</shortName>
    </alternativeName>
</protein>
<gene>
    <name evidence="1" type="primary">glpK</name>
    <name type="ordered locus">SP_2186</name>
</gene>